<evidence type="ECO:0000255" key="1">
    <source>
        <dbReference type="HAMAP-Rule" id="MF_01454"/>
    </source>
</evidence>
<evidence type="ECO:0000255" key="2">
    <source>
        <dbReference type="PROSITE-ProRule" id="PRU01231"/>
    </source>
</evidence>
<evidence type="ECO:0000256" key="3">
    <source>
        <dbReference type="SAM" id="MobiDB-lite"/>
    </source>
</evidence>
<keyword id="KW-0963">Cytoplasm</keyword>
<keyword id="KW-0342">GTP-binding</keyword>
<keyword id="KW-0378">Hydrolase</keyword>
<keyword id="KW-0460">Magnesium</keyword>
<keyword id="KW-0479">Metal-binding</keyword>
<keyword id="KW-0547">Nucleotide-binding</keyword>
<comment type="function">
    <text evidence="1">An essential GTPase which binds GTP, GDP and possibly (p)ppGpp with moderate affinity, with high nucleotide exchange rates and a fairly low GTP hydrolysis rate. Plays a role in control of the cell cycle, stress response, ribosome biogenesis and in those bacteria that undergo differentiation, in morphogenesis control.</text>
</comment>
<comment type="cofactor">
    <cofactor evidence="1">
        <name>Mg(2+)</name>
        <dbReference type="ChEBI" id="CHEBI:18420"/>
    </cofactor>
</comment>
<comment type="subunit">
    <text evidence="1">Monomer.</text>
</comment>
<comment type="subcellular location">
    <subcellularLocation>
        <location evidence="1">Cytoplasm</location>
    </subcellularLocation>
</comment>
<comment type="similarity">
    <text evidence="1">Belongs to the TRAFAC class OBG-HflX-like GTPase superfamily. OBG GTPase family.</text>
</comment>
<reference key="1">
    <citation type="journal article" date="2010" name="J. Bacteriol.">
        <title>Genome sequence of the deep-rooted Yersinia pestis strain Angola reveals new insights into the evolution and pangenome of the plague bacterium.</title>
        <authorList>
            <person name="Eppinger M."/>
            <person name="Worsham P.L."/>
            <person name="Nikolich M.P."/>
            <person name="Riley D.R."/>
            <person name="Sebastian Y."/>
            <person name="Mou S."/>
            <person name="Achtman M."/>
            <person name="Lindler L.E."/>
            <person name="Ravel J."/>
        </authorList>
    </citation>
    <scope>NUCLEOTIDE SEQUENCE [LARGE SCALE GENOMIC DNA]</scope>
    <source>
        <strain>Angola</strain>
    </source>
</reference>
<dbReference type="EC" id="3.6.5.-" evidence="1"/>
<dbReference type="EMBL" id="CP000901">
    <property type="protein sequence ID" value="ABX86586.1"/>
    <property type="molecule type" value="Genomic_DNA"/>
</dbReference>
<dbReference type="SMR" id="A9R591"/>
<dbReference type="KEGG" id="ypg:YpAngola_A3978"/>
<dbReference type="PATRIC" id="fig|349746.12.peg.703"/>
<dbReference type="GO" id="GO:0005737">
    <property type="term" value="C:cytoplasm"/>
    <property type="evidence" value="ECO:0007669"/>
    <property type="project" value="UniProtKB-SubCell"/>
</dbReference>
<dbReference type="GO" id="GO:0005525">
    <property type="term" value="F:GTP binding"/>
    <property type="evidence" value="ECO:0007669"/>
    <property type="project" value="UniProtKB-UniRule"/>
</dbReference>
<dbReference type="GO" id="GO:0003924">
    <property type="term" value="F:GTPase activity"/>
    <property type="evidence" value="ECO:0007669"/>
    <property type="project" value="UniProtKB-UniRule"/>
</dbReference>
<dbReference type="GO" id="GO:0000287">
    <property type="term" value="F:magnesium ion binding"/>
    <property type="evidence" value="ECO:0007669"/>
    <property type="project" value="InterPro"/>
</dbReference>
<dbReference type="GO" id="GO:0042254">
    <property type="term" value="P:ribosome biogenesis"/>
    <property type="evidence" value="ECO:0007669"/>
    <property type="project" value="UniProtKB-UniRule"/>
</dbReference>
<dbReference type="CDD" id="cd01898">
    <property type="entry name" value="Obg"/>
    <property type="match status" value="1"/>
</dbReference>
<dbReference type="FunFam" id="2.70.210.12:FF:000001">
    <property type="entry name" value="GTPase Obg"/>
    <property type="match status" value="1"/>
</dbReference>
<dbReference type="FunFam" id="3.40.50.300:FF:000185">
    <property type="entry name" value="GTPase Obg"/>
    <property type="match status" value="1"/>
</dbReference>
<dbReference type="Gene3D" id="2.70.210.12">
    <property type="entry name" value="GTP1/OBG domain"/>
    <property type="match status" value="1"/>
</dbReference>
<dbReference type="Gene3D" id="3.40.50.300">
    <property type="entry name" value="P-loop containing nucleotide triphosphate hydrolases"/>
    <property type="match status" value="1"/>
</dbReference>
<dbReference type="HAMAP" id="MF_01454">
    <property type="entry name" value="GTPase_Obg"/>
    <property type="match status" value="1"/>
</dbReference>
<dbReference type="InterPro" id="IPR031167">
    <property type="entry name" value="G_OBG"/>
</dbReference>
<dbReference type="InterPro" id="IPR006073">
    <property type="entry name" value="GTP-bd"/>
</dbReference>
<dbReference type="InterPro" id="IPR014100">
    <property type="entry name" value="GTP-bd_Obg/CgtA"/>
</dbReference>
<dbReference type="InterPro" id="IPR006074">
    <property type="entry name" value="GTP1-OBG_CS"/>
</dbReference>
<dbReference type="InterPro" id="IPR006169">
    <property type="entry name" value="GTP1_OBG_dom"/>
</dbReference>
<dbReference type="InterPro" id="IPR036726">
    <property type="entry name" value="GTP1_OBG_dom_sf"/>
</dbReference>
<dbReference type="InterPro" id="IPR045086">
    <property type="entry name" value="OBG_GTPase"/>
</dbReference>
<dbReference type="InterPro" id="IPR027417">
    <property type="entry name" value="P-loop_NTPase"/>
</dbReference>
<dbReference type="NCBIfam" id="TIGR02729">
    <property type="entry name" value="Obg_CgtA"/>
    <property type="match status" value="1"/>
</dbReference>
<dbReference type="NCBIfam" id="NF008955">
    <property type="entry name" value="PRK12297.1"/>
    <property type="match status" value="1"/>
</dbReference>
<dbReference type="NCBIfam" id="NF008956">
    <property type="entry name" value="PRK12299.1"/>
    <property type="match status" value="1"/>
</dbReference>
<dbReference type="PANTHER" id="PTHR11702">
    <property type="entry name" value="DEVELOPMENTALLY REGULATED GTP-BINDING PROTEIN-RELATED"/>
    <property type="match status" value="1"/>
</dbReference>
<dbReference type="PANTHER" id="PTHR11702:SF31">
    <property type="entry name" value="MITOCHONDRIAL RIBOSOME-ASSOCIATED GTPASE 2"/>
    <property type="match status" value="1"/>
</dbReference>
<dbReference type="Pfam" id="PF01018">
    <property type="entry name" value="GTP1_OBG"/>
    <property type="match status" value="1"/>
</dbReference>
<dbReference type="Pfam" id="PF01926">
    <property type="entry name" value="MMR_HSR1"/>
    <property type="match status" value="1"/>
</dbReference>
<dbReference type="PIRSF" id="PIRSF002401">
    <property type="entry name" value="GTP_bd_Obg/CgtA"/>
    <property type="match status" value="1"/>
</dbReference>
<dbReference type="PRINTS" id="PR00326">
    <property type="entry name" value="GTP1OBG"/>
</dbReference>
<dbReference type="SUPFAM" id="SSF82051">
    <property type="entry name" value="Obg GTP-binding protein N-terminal domain"/>
    <property type="match status" value="1"/>
</dbReference>
<dbReference type="SUPFAM" id="SSF52540">
    <property type="entry name" value="P-loop containing nucleoside triphosphate hydrolases"/>
    <property type="match status" value="1"/>
</dbReference>
<dbReference type="PROSITE" id="PS51710">
    <property type="entry name" value="G_OBG"/>
    <property type="match status" value="1"/>
</dbReference>
<dbReference type="PROSITE" id="PS00905">
    <property type="entry name" value="GTP1_OBG"/>
    <property type="match status" value="1"/>
</dbReference>
<dbReference type="PROSITE" id="PS51883">
    <property type="entry name" value="OBG"/>
    <property type="match status" value="1"/>
</dbReference>
<name>OBG_YERPG</name>
<accession>A9R591</accession>
<feature type="chain" id="PRO_0000386408" description="GTPase Obg">
    <location>
        <begin position="1"/>
        <end position="390"/>
    </location>
</feature>
<feature type="domain" description="Obg" evidence="2">
    <location>
        <begin position="1"/>
        <end position="159"/>
    </location>
</feature>
<feature type="domain" description="OBG-type G" evidence="1">
    <location>
        <begin position="160"/>
        <end position="333"/>
    </location>
</feature>
<feature type="region of interest" description="Disordered" evidence="3">
    <location>
        <begin position="364"/>
        <end position="390"/>
    </location>
</feature>
<feature type="compositionally biased region" description="Acidic residues" evidence="3">
    <location>
        <begin position="364"/>
        <end position="384"/>
    </location>
</feature>
<feature type="binding site" evidence="1">
    <location>
        <begin position="166"/>
        <end position="173"/>
    </location>
    <ligand>
        <name>GTP</name>
        <dbReference type="ChEBI" id="CHEBI:37565"/>
    </ligand>
</feature>
<feature type="binding site" evidence="1">
    <location>
        <position position="173"/>
    </location>
    <ligand>
        <name>Mg(2+)</name>
        <dbReference type="ChEBI" id="CHEBI:18420"/>
    </ligand>
</feature>
<feature type="binding site" evidence="1">
    <location>
        <begin position="191"/>
        <end position="195"/>
    </location>
    <ligand>
        <name>GTP</name>
        <dbReference type="ChEBI" id="CHEBI:37565"/>
    </ligand>
</feature>
<feature type="binding site" evidence="1">
    <location>
        <position position="193"/>
    </location>
    <ligand>
        <name>Mg(2+)</name>
        <dbReference type="ChEBI" id="CHEBI:18420"/>
    </ligand>
</feature>
<feature type="binding site" evidence="1">
    <location>
        <begin position="213"/>
        <end position="216"/>
    </location>
    <ligand>
        <name>GTP</name>
        <dbReference type="ChEBI" id="CHEBI:37565"/>
    </ligand>
</feature>
<feature type="binding site" evidence="1">
    <location>
        <begin position="283"/>
        <end position="286"/>
    </location>
    <ligand>
        <name>GTP</name>
        <dbReference type="ChEBI" id="CHEBI:37565"/>
    </ligand>
</feature>
<feature type="binding site" evidence="1">
    <location>
        <begin position="314"/>
        <end position="316"/>
    </location>
    <ligand>
        <name>GTP</name>
        <dbReference type="ChEBI" id="CHEBI:37565"/>
    </ligand>
</feature>
<sequence>MKFVDEAAILVVAGDGGNGCVSFRREKYIPNGGPDGGDGGDGGDIYLLADENLNTLIDYRFVKSFRAERGQNGQSRDCTGKRGKDITIKVPVGTRVLDQGTGEIVGDMVRHGQRLMVAKGGFHGLGNSRFKSSVNRAPRQKTMGTEGETRELMLELLLLADVGMLGLPNAGKSTFIRAVSAAKPKVADYPFTTLIPSLGVVRMDYEQSFVIADIPGLIEGASDGAGLGIRFLKHLERCRVLLHLVDLAPIDESDPAENAKVIVNELQQYSENLAEKPRWLVFNKIDLIDPEEAEKRAKAIVETLGWEGKYYMISAANRDNVNALCWDVMSFLNSQPKAMAIAESVPEKVEFMWDDYHREQLAEVEAEAEDDWDDDWDEEDDDGVEIIYER</sequence>
<protein>
    <recommendedName>
        <fullName evidence="1">GTPase Obg</fullName>
        <ecNumber evidence="1">3.6.5.-</ecNumber>
    </recommendedName>
    <alternativeName>
        <fullName evidence="1">GTP-binding protein Obg</fullName>
    </alternativeName>
</protein>
<gene>
    <name evidence="1" type="primary">obg</name>
    <name type="ordered locus">YpAngola_A3978</name>
</gene>
<proteinExistence type="inferred from homology"/>
<organism>
    <name type="scientific">Yersinia pestis bv. Antiqua (strain Angola)</name>
    <dbReference type="NCBI Taxonomy" id="349746"/>
    <lineage>
        <taxon>Bacteria</taxon>
        <taxon>Pseudomonadati</taxon>
        <taxon>Pseudomonadota</taxon>
        <taxon>Gammaproteobacteria</taxon>
        <taxon>Enterobacterales</taxon>
        <taxon>Yersiniaceae</taxon>
        <taxon>Yersinia</taxon>
    </lineage>
</organism>